<gene>
    <name evidence="1" type="primary">atpG</name>
    <name type="ordered locus">YPA_4167</name>
</gene>
<keyword id="KW-0066">ATP synthesis</keyword>
<keyword id="KW-0997">Cell inner membrane</keyword>
<keyword id="KW-1003">Cell membrane</keyword>
<keyword id="KW-0139">CF(1)</keyword>
<keyword id="KW-0375">Hydrogen ion transport</keyword>
<keyword id="KW-0406">Ion transport</keyword>
<keyword id="KW-0472">Membrane</keyword>
<keyword id="KW-0813">Transport</keyword>
<sequence length="287" mass="31578">MAGAKEIRSKIASVQNTQKITKAMEMVAASKMRKSQERMAASRPYAETMRSVIGHLALGNLEYKHPYLEERDVKRVGYLVVSTDRGLCGGLNINLFKRLLAEMKGWSEKGVECDLALIGSKAASFFGSVGGKIVAQVTGMGDNPSLSELIGPVKVMLQAYDEGRLDKLYIVNNKFINTMSQEPRIMQLLPLPPAEDGELKKKSWDYLYEPDPKALLDTLLRRYVESQVYQGVVENLASEQAARMVAMKAATDNGGSLIKELQLVYNKARQASITQELTEIVGGASAV</sequence>
<organism>
    <name type="scientific">Yersinia pestis bv. Antiqua (strain Antiqua)</name>
    <dbReference type="NCBI Taxonomy" id="360102"/>
    <lineage>
        <taxon>Bacteria</taxon>
        <taxon>Pseudomonadati</taxon>
        <taxon>Pseudomonadota</taxon>
        <taxon>Gammaproteobacteria</taxon>
        <taxon>Enterobacterales</taxon>
        <taxon>Yersiniaceae</taxon>
        <taxon>Yersinia</taxon>
    </lineage>
</organism>
<proteinExistence type="inferred from homology"/>
<accession>Q1C094</accession>
<evidence type="ECO:0000255" key="1">
    <source>
        <dbReference type="HAMAP-Rule" id="MF_00815"/>
    </source>
</evidence>
<reference key="1">
    <citation type="journal article" date="2006" name="J. Bacteriol.">
        <title>Complete genome sequence of Yersinia pestis strains Antiqua and Nepal516: evidence of gene reduction in an emerging pathogen.</title>
        <authorList>
            <person name="Chain P.S.G."/>
            <person name="Hu P."/>
            <person name="Malfatti S.A."/>
            <person name="Radnedge L."/>
            <person name="Larimer F."/>
            <person name="Vergez L.M."/>
            <person name="Worsham P."/>
            <person name="Chu M.C."/>
            <person name="Andersen G.L."/>
        </authorList>
    </citation>
    <scope>NUCLEOTIDE SEQUENCE [LARGE SCALE GENOMIC DNA]</scope>
    <source>
        <strain>Antiqua</strain>
    </source>
</reference>
<name>ATPG_YERPA</name>
<protein>
    <recommendedName>
        <fullName evidence="1">ATP synthase gamma chain</fullName>
    </recommendedName>
    <alternativeName>
        <fullName evidence="1">ATP synthase F1 sector gamma subunit</fullName>
    </alternativeName>
    <alternativeName>
        <fullName evidence="1">F-ATPase gamma subunit</fullName>
    </alternativeName>
</protein>
<feature type="chain" id="PRO_1000053378" description="ATP synthase gamma chain">
    <location>
        <begin position="1"/>
        <end position="287"/>
    </location>
</feature>
<dbReference type="EMBL" id="CP000308">
    <property type="protein sequence ID" value="ABG16128.1"/>
    <property type="molecule type" value="Genomic_DNA"/>
</dbReference>
<dbReference type="RefSeq" id="WP_002220756.1">
    <property type="nucleotide sequence ID" value="NZ_CP009906.1"/>
</dbReference>
<dbReference type="SMR" id="Q1C094"/>
<dbReference type="GeneID" id="96663460"/>
<dbReference type="KEGG" id="ypa:YPA_4167"/>
<dbReference type="Proteomes" id="UP000001971">
    <property type="component" value="Chromosome"/>
</dbReference>
<dbReference type="GO" id="GO:0005886">
    <property type="term" value="C:plasma membrane"/>
    <property type="evidence" value="ECO:0007669"/>
    <property type="project" value="UniProtKB-SubCell"/>
</dbReference>
<dbReference type="GO" id="GO:0045259">
    <property type="term" value="C:proton-transporting ATP synthase complex"/>
    <property type="evidence" value="ECO:0007669"/>
    <property type="project" value="UniProtKB-KW"/>
</dbReference>
<dbReference type="GO" id="GO:0005524">
    <property type="term" value="F:ATP binding"/>
    <property type="evidence" value="ECO:0007669"/>
    <property type="project" value="UniProtKB-UniRule"/>
</dbReference>
<dbReference type="GO" id="GO:0046933">
    <property type="term" value="F:proton-transporting ATP synthase activity, rotational mechanism"/>
    <property type="evidence" value="ECO:0007669"/>
    <property type="project" value="UniProtKB-UniRule"/>
</dbReference>
<dbReference type="GO" id="GO:0042777">
    <property type="term" value="P:proton motive force-driven plasma membrane ATP synthesis"/>
    <property type="evidence" value="ECO:0007669"/>
    <property type="project" value="UniProtKB-UniRule"/>
</dbReference>
<dbReference type="CDD" id="cd12151">
    <property type="entry name" value="F1-ATPase_gamma"/>
    <property type="match status" value="1"/>
</dbReference>
<dbReference type="FunFam" id="1.10.287.80:FF:000005">
    <property type="entry name" value="ATP synthase gamma chain"/>
    <property type="match status" value="2"/>
</dbReference>
<dbReference type="FunFam" id="3.40.1380.10:FF:000001">
    <property type="entry name" value="ATP synthase gamma chain"/>
    <property type="match status" value="1"/>
</dbReference>
<dbReference type="Gene3D" id="3.40.1380.10">
    <property type="match status" value="1"/>
</dbReference>
<dbReference type="Gene3D" id="1.10.287.80">
    <property type="entry name" value="ATP synthase, gamma subunit, helix hairpin domain"/>
    <property type="match status" value="1"/>
</dbReference>
<dbReference type="HAMAP" id="MF_00815">
    <property type="entry name" value="ATP_synth_gamma_bact"/>
    <property type="match status" value="1"/>
</dbReference>
<dbReference type="InterPro" id="IPR035968">
    <property type="entry name" value="ATP_synth_F1_ATPase_gsu"/>
</dbReference>
<dbReference type="InterPro" id="IPR000131">
    <property type="entry name" value="ATP_synth_F1_gsu"/>
</dbReference>
<dbReference type="InterPro" id="IPR023632">
    <property type="entry name" value="ATP_synth_F1_gsu_CS"/>
</dbReference>
<dbReference type="NCBIfam" id="TIGR01146">
    <property type="entry name" value="ATPsyn_F1gamma"/>
    <property type="match status" value="1"/>
</dbReference>
<dbReference type="NCBIfam" id="NF004144">
    <property type="entry name" value="PRK05621.1-1"/>
    <property type="match status" value="1"/>
</dbReference>
<dbReference type="PANTHER" id="PTHR11693">
    <property type="entry name" value="ATP SYNTHASE GAMMA CHAIN"/>
    <property type="match status" value="1"/>
</dbReference>
<dbReference type="PANTHER" id="PTHR11693:SF22">
    <property type="entry name" value="ATP SYNTHASE SUBUNIT GAMMA, MITOCHONDRIAL"/>
    <property type="match status" value="1"/>
</dbReference>
<dbReference type="Pfam" id="PF00231">
    <property type="entry name" value="ATP-synt"/>
    <property type="match status" value="1"/>
</dbReference>
<dbReference type="PRINTS" id="PR00126">
    <property type="entry name" value="ATPASEGAMMA"/>
</dbReference>
<dbReference type="SUPFAM" id="SSF52943">
    <property type="entry name" value="ATP synthase (F1-ATPase), gamma subunit"/>
    <property type="match status" value="1"/>
</dbReference>
<dbReference type="PROSITE" id="PS00153">
    <property type="entry name" value="ATPASE_GAMMA"/>
    <property type="match status" value="1"/>
</dbReference>
<comment type="function">
    <text evidence="1">Produces ATP from ADP in the presence of a proton gradient across the membrane. The gamma chain is believed to be important in regulating ATPase activity and the flow of protons through the CF(0) complex.</text>
</comment>
<comment type="subunit">
    <text evidence="1">F-type ATPases have 2 components, CF(1) - the catalytic core - and CF(0) - the membrane proton channel. CF(1) has five subunits: alpha(3), beta(3), gamma(1), delta(1), epsilon(1). CF(0) has three main subunits: a, b and c.</text>
</comment>
<comment type="subcellular location">
    <subcellularLocation>
        <location evidence="1">Cell inner membrane</location>
        <topology evidence="1">Peripheral membrane protein</topology>
    </subcellularLocation>
</comment>
<comment type="similarity">
    <text evidence="1">Belongs to the ATPase gamma chain family.</text>
</comment>